<evidence type="ECO:0000250" key="1">
    <source>
        <dbReference type="UniProtKB" id="Q9ZBU1"/>
    </source>
</evidence>
<evidence type="ECO:0000255" key="2"/>
<evidence type="ECO:0000255" key="3">
    <source>
        <dbReference type="PROSITE-ProRule" id="PRU00718"/>
    </source>
</evidence>
<evidence type="ECO:0000269" key="4">
    <source>
    </source>
</evidence>
<evidence type="ECO:0000303" key="5">
    <source>
    </source>
</evidence>
<evidence type="ECO:0000305" key="6"/>
<evidence type="ECO:0000305" key="7">
    <source>
    </source>
</evidence>
<accession>A0A075HNX4</accession>
<protein>
    <recommendedName>
        <fullName evidence="5">Long-chain alcohol oxidase</fullName>
        <shortName evidence="5">LCAO</shortName>
        <ecNumber evidence="4">1.1.3.20</ecNumber>
    </recommendedName>
</protein>
<dbReference type="EC" id="1.1.3.20" evidence="4"/>
<dbReference type="EMBL" id="KF901047">
    <property type="protein sequence ID" value="AIF16132.1"/>
    <property type="molecule type" value="Genomic_DNA"/>
</dbReference>
<dbReference type="SMR" id="A0A075HNX4"/>
<dbReference type="UniPathway" id="UPA00199"/>
<dbReference type="GO" id="GO:0005886">
    <property type="term" value="C:plasma membrane"/>
    <property type="evidence" value="ECO:0007669"/>
    <property type="project" value="UniProtKB-SubCell"/>
</dbReference>
<dbReference type="GO" id="GO:0003885">
    <property type="term" value="F:D-arabinono-1,4-lactone oxidase activity"/>
    <property type="evidence" value="ECO:0007669"/>
    <property type="project" value="InterPro"/>
</dbReference>
<dbReference type="GO" id="GO:0071949">
    <property type="term" value="F:FAD binding"/>
    <property type="evidence" value="ECO:0007669"/>
    <property type="project" value="InterPro"/>
</dbReference>
<dbReference type="GO" id="GO:0050105">
    <property type="term" value="F:L-gulonolactone oxidase activity"/>
    <property type="evidence" value="ECO:0007669"/>
    <property type="project" value="UniProtKB-EC"/>
</dbReference>
<dbReference type="GO" id="GO:0046577">
    <property type="term" value="F:long-chain-alcohol oxidase activity"/>
    <property type="evidence" value="ECO:0007669"/>
    <property type="project" value="RHEA"/>
</dbReference>
<dbReference type="GO" id="GO:0006631">
    <property type="term" value="P:fatty acid metabolic process"/>
    <property type="evidence" value="ECO:0007669"/>
    <property type="project" value="UniProtKB-UniPathway"/>
</dbReference>
<dbReference type="Gene3D" id="3.30.465.10">
    <property type="match status" value="1"/>
</dbReference>
<dbReference type="Gene3D" id="3.30.70.2520">
    <property type="match status" value="1"/>
</dbReference>
<dbReference type="Gene3D" id="3.30.43.10">
    <property type="entry name" value="Uridine Diphospho-n-acetylenolpyruvylglucosamine Reductase, domain 2"/>
    <property type="match status" value="1"/>
</dbReference>
<dbReference type="Gene3D" id="1.10.45.10">
    <property type="entry name" value="Vanillyl-alcohol Oxidase, Chain A, domain 4"/>
    <property type="match status" value="1"/>
</dbReference>
<dbReference type="InterPro" id="IPR007173">
    <property type="entry name" value="ALO_C"/>
</dbReference>
<dbReference type="InterPro" id="IPR016166">
    <property type="entry name" value="FAD-bd_PCMH"/>
</dbReference>
<dbReference type="InterPro" id="IPR036318">
    <property type="entry name" value="FAD-bd_PCMH-like_sf"/>
</dbReference>
<dbReference type="InterPro" id="IPR016167">
    <property type="entry name" value="FAD-bd_PCMH_sub1"/>
</dbReference>
<dbReference type="InterPro" id="IPR016169">
    <property type="entry name" value="FAD-bd_PCMH_sub2"/>
</dbReference>
<dbReference type="InterPro" id="IPR010031">
    <property type="entry name" value="FAD_lactone_oxidase-like"/>
</dbReference>
<dbReference type="InterPro" id="IPR006094">
    <property type="entry name" value="Oxid_FAD_bind_N"/>
</dbReference>
<dbReference type="InterPro" id="IPR016171">
    <property type="entry name" value="Vanillyl_alc_oxidase_C-sub2"/>
</dbReference>
<dbReference type="PANTHER" id="PTHR43762:SF1">
    <property type="entry name" value="D-ARABINONO-1,4-LACTONE OXIDASE"/>
    <property type="match status" value="1"/>
</dbReference>
<dbReference type="PANTHER" id="PTHR43762">
    <property type="entry name" value="L-GULONOLACTONE OXIDASE"/>
    <property type="match status" value="1"/>
</dbReference>
<dbReference type="Pfam" id="PF04030">
    <property type="entry name" value="ALO"/>
    <property type="match status" value="1"/>
</dbReference>
<dbReference type="Pfam" id="PF01565">
    <property type="entry name" value="FAD_binding_4"/>
    <property type="match status" value="1"/>
</dbReference>
<dbReference type="PIRSF" id="PIRSF000136">
    <property type="entry name" value="LGO_GLO"/>
    <property type="match status" value="1"/>
</dbReference>
<dbReference type="SUPFAM" id="SSF56176">
    <property type="entry name" value="FAD-binding/transporter-associated domain-like"/>
    <property type="match status" value="1"/>
</dbReference>
<dbReference type="PROSITE" id="PS51387">
    <property type="entry name" value="FAD_PCMH"/>
    <property type="match status" value="1"/>
</dbReference>
<proteinExistence type="evidence at protein level"/>
<keyword id="KW-1003">Cell membrane</keyword>
<keyword id="KW-0274">FAD</keyword>
<keyword id="KW-0285">Flavoprotein</keyword>
<keyword id="KW-0472">Membrane</keyword>
<keyword id="KW-0560">Oxidoreductase</keyword>
<keyword id="KW-0812">Transmembrane</keyword>
<keyword id="KW-1133">Transmembrane helix</keyword>
<organism>
    <name type="scientific">Uncultured marine euryarchaeote</name>
    <dbReference type="NCBI Taxonomy" id="257466"/>
    <lineage>
        <taxon>Archaea</taxon>
        <taxon>Methanobacteriati</taxon>
        <taxon>Methanobacteriota</taxon>
        <taxon>environmental samples</taxon>
    </lineage>
</organism>
<comment type="function">
    <text evidence="4">In vitro catalyzes the oxidation of a range of fatty alcohols having a carbon chain length of six and above, with a reduction of O2 to H2O2. Shows the highest activity with 1-dodecanol. Is likely involved in lipid metabolism.</text>
</comment>
<comment type="catalytic activity">
    <reaction evidence="4">
        <text>a long-chain primary fatty alcohol + O2 = a long-chain fatty aldehyde + H2O2</text>
        <dbReference type="Rhea" id="RHEA:22756"/>
        <dbReference type="ChEBI" id="CHEBI:15379"/>
        <dbReference type="ChEBI" id="CHEBI:16240"/>
        <dbReference type="ChEBI" id="CHEBI:17176"/>
        <dbReference type="ChEBI" id="CHEBI:77396"/>
        <dbReference type="EC" id="1.1.3.20"/>
    </reaction>
</comment>
<comment type="catalytic activity">
    <reaction evidence="4">
        <text>dodecan-1-ol + O2 = dodecanal + H2O2</text>
        <dbReference type="Rhea" id="RHEA:69484"/>
        <dbReference type="ChEBI" id="CHEBI:15379"/>
        <dbReference type="ChEBI" id="CHEBI:16240"/>
        <dbReference type="ChEBI" id="CHEBI:27836"/>
        <dbReference type="ChEBI" id="CHEBI:28878"/>
        <dbReference type="EC" id="1.1.3.20"/>
    </reaction>
</comment>
<comment type="catalytic activity">
    <reaction evidence="4">
        <text>tetradecan-1-ol + O2 = tetradecanal + H2O2</text>
        <dbReference type="Rhea" id="RHEA:69488"/>
        <dbReference type="ChEBI" id="CHEBI:15379"/>
        <dbReference type="ChEBI" id="CHEBI:16240"/>
        <dbReference type="ChEBI" id="CHEBI:77417"/>
        <dbReference type="ChEBI" id="CHEBI:84067"/>
    </reaction>
</comment>
<comment type="catalytic activity">
    <reaction evidence="4">
        <text>octan-1-ol + O2 = octanal + H2O2</text>
        <dbReference type="Rhea" id="RHEA:69492"/>
        <dbReference type="ChEBI" id="CHEBI:15379"/>
        <dbReference type="ChEBI" id="CHEBI:16188"/>
        <dbReference type="ChEBI" id="CHEBI:16240"/>
        <dbReference type="ChEBI" id="CHEBI:17935"/>
    </reaction>
</comment>
<comment type="catalytic activity">
    <reaction evidence="4">
        <text>decan-1-ol + O2 = decanal + H2O2</text>
        <dbReference type="Rhea" id="RHEA:69496"/>
        <dbReference type="ChEBI" id="CHEBI:15379"/>
        <dbReference type="ChEBI" id="CHEBI:16240"/>
        <dbReference type="ChEBI" id="CHEBI:28903"/>
        <dbReference type="ChEBI" id="CHEBI:31457"/>
    </reaction>
</comment>
<comment type="cofactor">
    <cofactor evidence="1">
        <name>FAD</name>
        <dbReference type="ChEBI" id="CHEBI:57692"/>
    </cofactor>
    <text evidence="1">Binds 1 FAD covalently per subunit.</text>
</comment>
<comment type="biophysicochemical properties">
    <kinetics>
        <KM evidence="4">27.7 uM for 1-dodecanol</KM>
    </kinetics>
    <phDependence>
        <text evidence="4">Optimum pH is 8-9. Shows almost no activity at pH 5.</text>
    </phDependence>
</comment>
<comment type="pathway">
    <text evidence="7">Lipid metabolism; fatty acid metabolism.</text>
</comment>
<comment type="subcellular location">
    <subcellularLocation>
        <location evidence="2">Cell membrane</location>
        <topology evidence="2">Single-pass membrane protein</topology>
    </subcellularLocation>
</comment>
<comment type="similarity">
    <text evidence="6">Belongs to the oxygen-dependent FAD-linked oxidoreductase family.</text>
</comment>
<sequence length="479" mass="54379">MAQGAQRKNFGHNQILRPSAAYTPVDEQEVLQILDRHRGQRIRAVGRLHSWSEAVTGDGVLLDLQRLNDVRLQSDGDQLVATVGAGCQIKRLLKELNREGATLHSLGLITAQTIAGAISTGTHGSGRNSMSHYVVGVRLACYDASTGQAIIEELSAGEPLQAARCSLGSLGIILAVRIRCREQYNVQEHFTESRRLLDVMDAEAPFPLQQFYLLPWRWSYFIQHRREDDRPRSRLARLYRLYWLGTMDYGLILQILFLERVARSRRLIRLAFRRIIPAFLIRNWRVTDRSSSMLVMRHDAFRHIEIELFVRRDQLADALGFTQEVIKIAGGRESALSADNQRRIEELGMQEALAGLHDQYCHHFPICVRRVLPDDTLISMASGAGEDWYALSFISYAKPARRAGFSLFASFMARSMSRLFHARPHWGKVCPLEADELTSLYPRFDAFRTVCNTLDPQGVFQNDWTTALLEADGQVGDFP</sequence>
<reference key="1">
    <citation type="journal article" date="2014" name="Genome Biol. Evol.">
        <title>Pangenome evidence for extensive interdomain horizontal transfer affecting lineage core and shell genes in uncultured planktonic thaumarchaeota and euryarchaeota.</title>
        <authorList>
            <person name="Deschamps P."/>
            <person name="Zivanovic Y."/>
            <person name="Moreira D."/>
            <person name="Rodriguez-Valera F."/>
            <person name="Lopez-Garcia P."/>
        </authorList>
    </citation>
    <scope>NUCLEOTIDE SEQUENCE [GENOMIC DNA]</scope>
    <source>
        <strain>KM3_72_H01 / Group II/III</strain>
    </source>
</reference>
<reference key="2">
    <citation type="journal article" date="2021" name="ChemBioChem">
        <title>Discovery of two novel oxidases using a high-throughput activity screen.</title>
        <authorList>
            <person name="Rembeza E."/>
            <person name="Boverio A."/>
            <person name="Fraaije M.W."/>
            <person name="Engqvist M."/>
        </authorList>
    </citation>
    <scope>FUNCTION</scope>
    <scope>CATALYTIC ACTIVITY</scope>
    <scope>BIOPHYSICOCHEMICAL PROPERTIES</scope>
</reference>
<feature type="chain" id="PRO_0000455050" description="Long-chain alcohol oxidase">
    <location>
        <begin position="1"/>
        <end position="479"/>
    </location>
</feature>
<feature type="transmembrane region" description="Helical" evidence="2">
    <location>
        <begin position="241"/>
        <end position="258"/>
    </location>
</feature>
<feature type="domain" description="FAD-binding PCMH-type" evidence="3">
    <location>
        <begin position="14"/>
        <end position="183"/>
    </location>
</feature>
<feature type="binding site" evidence="1">
    <location>
        <position position="113"/>
    </location>
    <ligand>
        <name>FAD</name>
        <dbReference type="ChEBI" id="CHEBI:57692"/>
    </ligand>
</feature>
<feature type="binding site" evidence="1">
    <location>
        <position position="116"/>
    </location>
    <ligand>
        <name>FAD</name>
        <dbReference type="ChEBI" id="CHEBI:57692"/>
    </ligand>
</feature>
<feature type="binding site" evidence="1">
    <location>
        <begin position="120"/>
        <end position="123"/>
    </location>
    <ligand>
        <name>FAD</name>
        <dbReference type="ChEBI" id="CHEBI:57692"/>
    </ligand>
</feature>
<feature type="binding site" evidence="1">
    <location>
        <position position="173"/>
    </location>
    <ligand>
        <name>FAD</name>
        <dbReference type="ChEBI" id="CHEBI:57692"/>
    </ligand>
</feature>
<feature type="binding site" evidence="1">
    <location>
        <position position="369"/>
    </location>
    <ligand>
        <name>FAD</name>
        <dbReference type="ChEBI" id="CHEBI:57692"/>
    </ligand>
</feature>
<feature type="binding site" evidence="1">
    <location>
        <position position="425"/>
    </location>
    <ligand>
        <name>FAD</name>
        <dbReference type="ChEBI" id="CHEBI:57692"/>
    </ligand>
</feature>
<feature type="modified residue" description="Pros-8alpha-FAD histidine" evidence="1">
    <location>
        <position position="49"/>
    </location>
</feature>
<name>LCAO_UNCAR</name>